<protein>
    <recommendedName>
        <fullName evidence="1">UPF0434 protein Patl_1782</fullName>
    </recommendedName>
</protein>
<organism>
    <name type="scientific">Pseudoalteromonas atlantica (strain T6c / ATCC BAA-1087)</name>
    <dbReference type="NCBI Taxonomy" id="3042615"/>
    <lineage>
        <taxon>Bacteria</taxon>
        <taxon>Pseudomonadati</taxon>
        <taxon>Pseudomonadota</taxon>
        <taxon>Gammaproteobacteria</taxon>
        <taxon>Alteromonadales</taxon>
        <taxon>Alteromonadaceae</taxon>
        <taxon>Paraglaciecola</taxon>
    </lineage>
</organism>
<evidence type="ECO:0000255" key="1">
    <source>
        <dbReference type="HAMAP-Rule" id="MF_01187"/>
    </source>
</evidence>
<gene>
    <name type="ordered locus">Patl_1782</name>
</gene>
<proteinExistence type="inferred from homology"/>
<comment type="similarity">
    <text evidence="1">Belongs to the UPF0434 family.</text>
</comment>
<sequence>MAFDKKLLEIVACPVCKGTLILNKDSNGNERLVCRFDRLAYPIEQNIPVLLETEALVLSSEELEKIK</sequence>
<feature type="chain" id="PRO_0000291129" description="UPF0434 protein Patl_1782">
    <location>
        <begin position="1"/>
        <end position="67"/>
    </location>
</feature>
<accession>Q15UY5</accession>
<reference key="1">
    <citation type="submission" date="2006-06" db="EMBL/GenBank/DDBJ databases">
        <title>Complete sequence of Pseudoalteromonas atlantica T6c.</title>
        <authorList>
            <consortium name="US DOE Joint Genome Institute"/>
            <person name="Copeland A."/>
            <person name="Lucas S."/>
            <person name="Lapidus A."/>
            <person name="Barry K."/>
            <person name="Detter J.C."/>
            <person name="Glavina del Rio T."/>
            <person name="Hammon N."/>
            <person name="Israni S."/>
            <person name="Dalin E."/>
            <person name="Tice H."/>
            <person name="Pitluck S."/>
            <person name="Saunders E."/>
            <person name="Brettin T."/>
            <person name="Bruce D."/>
            <person name="Han C."/>
            <person name="Tapia R."/>
            <person name="Gilna P."/>
            <person name="Schmutz J."/>
            <person name="Larimer F."/>
            <person name="Land M."/>
            <person name="Hauser L."/>
            <person name="Kyrpides N."/>
            <person name="Kim E."/>
            <person name="Karls A.C."/>
            <person name="Bartlett D."/>
            <person name="Higgins B.P."/>
            <person name="Richardson P."/>
        </authorList>
    </citation>
    <scope>NUCLEOTIDE SEQUENCE [LARGE SCALE GENOMIC DNA]</scope>
    <source>
        <strain>T6c / ATCC BAA-1087</strain>
    </source>
</reference>
<dbReference type="EMBL" id="CP000388">
    <property type="protein sequence ID" value="ABG40303.1"/>
    <property type="molecule type" value="Genomic_DNA"/>
</dbReference>
<dbReference type="RefSeq" id="WP_006992455.1">
    <property type="nucleotide sequence ID" value="NC_008228.1"/>
</dbReference>
<dbReference type="SMR" id="Q15UY5"/>
<dbReference type="STRING" id="342610.Patl_1782"/>
<dbReference type="KEGG" id="pat:Patl_1782"/>
<dbReference type="eggNOG" id="COG2835">
    <property type="taxonomic scope" value="Bacteria"/>
</dbReference>
<dbReference type="HOGENOM" id="CLU_155659_3_1_6"/>
<dbReference type="OrthoDB" id="9812205at2"/>
<dbReference type="Proteomes" id="UP000001981">
    <property type="component" value="Chromosome"/>
</dbReference>
<dbReference type="GO" id="GO:0005829">
    <property type="term" value="C:cytosol"/>
    <property type="evidence" value="ECO:0007669"/>
    <property type="project" value="TreeGrafter"/>
</dbReference>
<dbReference type="FunFam" id="2.20.25.10:FF:000002">
    <property type="entry name" value="UPF0434 protein YcaR"/>
    <property type="match status" value="1"/>
</dbReference>
<dbReference type="Gene3D" id="2.20.25.10">
    <property type="match status" value="1"/>
</dbReference>
<dbReference type="HAMAP" id="MF_01187">
    <property type="entry name" value="UPF0434"/>
    <property type="match status" value="1"/>
</dbReference>
<dbReference type="InterPro" id="IPR005651">
    <property type="entry name" value="Trm112-like"/>
</dbReference>
<dbReference type="PANTHER" id="PTHR33505:SF4">
    <property type="entry name" value="PROTEIN PREY, MITOCHONDRIAL"/>
    <property type="match status" value="1"/>
</dbReference>
<dbReference type="PANTHER" id="PTHR33505">
    <property type="entry name" value="ZGC:162634"/>
    <property type="match status" value="1"/>
</dbReference>
<dbReference type="Pfam" id="PF03966">
    <property type="entry name" value="Trm112p"/>
    <property type="match status" value="1"/>
</dbReference>
<dbReference type="SUPFAM" id="SSF158997">
    <property type="entry name" value="Trm112p-like"/>
    <property type="match status" value="1"/>
</dbReference>
<name>Y1782_PSEA6</name>